<name>TBCA_YEAST</name>
<evidence type="ECO:0000269" key="1">
    <source>
    </source>
</evidence>
<evidence type="ECO:0000305" key="2"/>
<evidence type="ECO:0007744" key="3">
    <source>
    </source>
</evidence>
<evidence type="ECO:0007744" key="4">
    <source>
    </source>
</evidence>
<evidence type="ECO:0007744" key="5">
    <source>
    </source>
</evidence>
<evidence type="ECO:0007829" key="6">
    <source>
        <dbReference type="PDB" id="1QSD"/>
    </source>
</evidence>
<keyword id="KW-0002">3D-structure</keyword>
<keyword id="KW-0143">Chaperone</keyword>
<keyword id="KW-0963">Cytoplasm</keyword>
<keyword id="KW-0206">Cytoskeleton</keyword>
<keyword id="KW-0493">Microtubule</keyword>
<keyword id="KW-0597">Phosphoprotein</keyword>
<keyword id="KW-1185">Reference proteome</keyword>
<organism>
    <name type="scientific">Saccharomyces cerevisiae (strain ATCC 204508 / S288c)</name>
    <name type="common">Baker's yeast</name>
    <dbReference type="NCBI Taxonomy" id="559292"/>
    <lineage>
        <taxon>Eukaryota</taxon>
        <taxon>Fungi</taxon>
        <taxon>Dikarya</taxon>
        <taxon>Ascomycota</taxon>
        <taxon>Saccharomycotina</taxon>
        <taxon>Saccharomycetes</taxon>
        <taxon>Saccharomycetales</taxon>
        <taxon>Saccharomycetaceae</taxon>
        <taxon>Saccharomyces</taxon>
    </lineage>
</organism>
<feature type="chain" id="PRO_0000080045" description="Tubulin-specific chaperone A">
    <location>
        <begin position="1"/>
        <end position="106"/>
    </location>
</feature>
<feature type="modified residue" description="Phosphoserine" evidence="3 4 5">
    <location>
        <position position="94"/>
    </location>
</feature>
<feature type="helix" evidence="6">
    <location>
        <begin position="5"/>
        <end position="39"/>
    </location>
</feature>
<feature type="helix" evidence="6">
    <location>
        <begin position="45"/>
        <end position="81"/>
    </location>
</feature>
<feature type="strand" evidence="6">
    <location>
        <begin position="85"/>
        <end position="87"/>
    </location>
</feature>
<feature type="helix" evidence="6">
    <location>
        <begin position="90"/>
        <end position="104"/>
    </location>
</feature>
<accession>P48606</accession>
<accession>D6W2W5</accession>
<proteinExistence type="evidence at protein level"/>
<sequence>MAPTQLDIKVKALKRLTKEEGYYQQELKDQEAHVAKLKEDKSVDPYDLKKQEEVLDDTKRLLPTLYEKIREFKEDLEQFLKTYQGTEDVSDARSAITSAQELLDSK</sequence>
<comment type="function">
    <text>Tubulin-folding protein; involved in the early step of the tubulin folding pathway.</text>
</comment>
<comment type="interaction">
    <interactant intactId="EBI-18991">
        <id>P48606</id>
    </interactant>
    <interactant intactId="EBI-18986">
        <id>P02557</id>
        <label>TUB2</label>
    </interactant>
    <organismsDiffer>false</organismsDiffer>
    <experiments>2</experiments>
</comment>
<comment type="subcellular location">
    <subcellularLocation>
        <location>Cytoplasm</location>
        <location>Cytoskeleton</location>
    </subcellularLocation>
</comment>
<comment type="miscellaneous">
    <text evidence="1">Present with 1760 molecules/cell in log phase SD medium.</text>
</comment>
<comment type="similarity">
    <text evidence="2">Belongs to the TBCA family.</text>
</comment>
<dbReference type="EMBL" id="U30184">
    <property type="protein sequence ID" value="AAB08525.1"/>
    <property type="molecule type" value="Genomic_DNA"/>
</dbReference>
<dbReference type="EMBL" id="Z75173">
    <property type="protein sequence ID" value="CAA99488.1"/>
    <property type="molecule type" value="Genomic_DNA"/>
</dbReference>
<dbReference type="EMBL" id="AY692767">
    <property type="protein sequence ID" value="AAT92786.1"/>
    <property type="molecule type" value="Genomic_DNA"/>
</dbReference>
<dbReference type="EMBL" id="BK006948">
    <property type="protein sequence ID" value="DAA11031.1"/>
    <property type="molecule type" value="Genomic_DNA"/>
</dbReference>
<dbReference type="PIR" id="S64649">
    <property type="entry name" value="S64649"/>
</dbReference>
<dbReference type="RefSeq" id="NP_014908.1">
    <property type="nucleotide sequence ID" value="NM_001183684.1"/>
</dbReference>
<dbReference type="PDB" id="1QSD">
    <property type="method" value="X-ray"/>
    <property type="resolution" value="2.20 A"/>
    <property type="chains" value="A/B=1-106"/>
</dbReference>
<dbReference type="PDBsum" id="1QSD"/>
<dbReference type="SMR" id="P48606"/>
<dbReference type="BioGRID" id="34654">
    <property type="interactions" value="182"/>
</dbReference>
<dbReference type="DIP" id="DIP-4101N"/>
<dbReference type="FunCoup" id="P48606">
    <property type="interactions" value="857"/>
</dbReference>
<dbReference type="IntAct" id="P48606">
    <property type="interactions" value="10"/>
</dbReference>
<dbReference type="MINT" id="P48606"/>
<dbReference type="STRING" id="4932.YOR265W"/>
<dbReference type="iPTMnet" id="P48606"/>
<dbReference type="PaxDb" id="4932-YOR265W"/>
<dbReference type="PeptideAtlas" id="P48606"/>
<dbReference type="EnsemblFungi" id="YOR265W_mRNA">
    <property type="protein sequence ID" value="YOR265W"/>
    <property type="gene ID" value="YOR265W"/>
</dbReference>
<dbReference type="GeneID" id="854439"/>
<dbReference type="KEGG" id="sce:YOR265W"/>
<dbReference type="AGR" id="SGD:S000005791"/>
<dbReference type="SGD" id="S000005791">
    <property type="gene designation" value="RBL2"/>
</dbReference>
<dbReference type="VEuPathDB" id="FungiDB:YOR265W"/>
<dbReference type="eggNOG" id="KOG3470">
    <property type="taxonomic scope" value="Eukaryota"/>
</dbReference>
<dbReference type="HOGENOM" id="CLU_130569_2_0_1"/>
<dbReference type="InParanoid" id="P48606"/>
<dbReference type="OMA" id="EECEMMI"/>
<dbReference type="OrthoDB" id="296187at2759"/>
<dbReference type="BioCyc" id="YEAST:G3O-33755-MONOMER"/>
<dbReference type="BioGRID-ORCS" id="854439">
    <property type="hits" value="0 hits in 10 CRISPR screens"/>
</dbReference>
<dbReference type="EvolutionaryTrace" id="P48606"/>
<dbReference type="PRO" id="PR:P48606"/>
<dbReference type="Proteomes" id="UP000002311">
    <property type="component" value="Chromosome XV"/>
</dbReference>
<dbReference type="RNAct" id="P48606">
    <property type="molecule type" value="protein"/>
</dbReference>
<dbReference type="GO" id="GO:0005737">
    <property type="term" value="C:cytoplasm"/>
    <property type="evidence" value="ECO:0007005"/>
    <property type="project" value="SGD"/>
</dbReference>
<dbReference type="GO" id="GO:0005874">
    <property type="term" value="C:microtubule"/>
    <property type="evidence" value="ECO:0007669"/>
    <property type="project" value="UniProtKB-KW"/>
</dbReference>
<dbReference type="GO" id="GO:0015630">
    <property type="term" value="C:microtubule cytoskeleton"/>
    <property type="evidence" value="ECO:0000318"/>
    <property type="project" value="GO_Central"/>
</dbReference>
<dbReference type="GO" id="GO:0048487">
    <property type="term" value="F:beta-tubulin binding"/>
    <property type="evidence" value="ECO:0000315"/>
    <property type="project" value="SGD"/>
</dbReference>
<dbReference type="GO" id="GO:0015631">
    <property type="term" value="F:tubulin binding"/>
    <property type="evidence" value="ECO:0000314"/>
    <property type="project" value="SGD"/>
</dbReference>
<dbReference type="GO" id="GO:0007023">
    <property type="term" value="P:post-chaperonin tubulin folding pathway"/>
    <property type="evidence" value="ECO:0007669"/>
    <property type="project" value="InterPro"/>
</dbReference>
<dbReference type="GO" id="GO:0006457">
    <property type="term" value="P:protein folding"/>
    <property type="evidence" value="ECO:0000318"/>
    <property type="project" value="GO_Central"/>
</dbReference>
<dbReference type="GO" id="GO:0007021">
    <property type="term" value="P:tubulin complex assembly"/>
    <property type="evidence" value="ECO:0000315"/>
    <property type="project" value="SGD"/>
</dbReference>
<dbReference type="FunFam" id="1.20.58.90:FF:000010">
    <property type="entry name" value="Tubulin-specific chaperone A"/>
    <property type="match status" value="1"/>
</dbReference>
<dbReference type="Gene3D" id="1.20.58.90">
    <property type="match status" value="1"/>
</dbReference>
<dbReference type="InterPro" id="IPR004226">
    <property type="entry name" value="TBCA"/>
</dbReference>
<dbReference type="InterPro" id="IPR036126">
    <property type="entry name" value="TBCA_sf"/>
</dbReference>
<dbReference type="PANTHER" id="PTHR21500">
    <property type="entry name" value="TUBULIN-SPECIFIC CHAPERONE A"/>
    <property type="match status" value="1"/>
</dbReference>
<dbReference type="PANTHER" id="PTHR21500:SF0">
    <property type="entry name" value="TUBULIN-SPECIFIC CHAPERONE A"/>
    <property type="match status" value="1"/>
</dbReference>
<dbReference type="Pfam" id="PF02970">
    <property type="entry name" value="TBCA"/>
    <property type="match status" value="1"/>
</dbReference>
<dbReference type="SUPFAM" id="SSF46988">
    <property type="entry name" value="Tubulin chaperone cofactor A"/>
    <property type="match status" value="1"/>
</dbReference>
<reference key="1">
    <citation type="journal article" date="1995" name="Cell">
        <title>Rbl2p, a yeast protein that binds to beta-tubulin and participates in microtubule function in vivo.</title>
        <authorList>
            <person name="Archer J.E."/>
            <person name="Vega L.R."/>
            <person name="Solomon F."/>
        </authorList>
    </citation>
    <scope>NUCLEOTIDE SEQUENCE [GENOMIC DNA]</scope>
</reference>
<reference key="2">
    <citation type="journal article" date="1997" name="Yeast">
        <title>Sequencing analysis of a 36.8 kb fragment of yeast chromosome XV reveals 26 open reading frames including SEC63, CDC31, SUG2, GCD1, RBL2, PNT1, PAC1 and VPH1.</title>
        <authorList>
            <person name="Poirey R."/>
            <person name="Jauniaux J.-C."/>
        </authorList>
    </citation>
    <scope>NUCLEOTIDE SEQUENCE [GENOMIC DNA]</scope>
    <source>
        <strain>ATCC 96604 / S288c / FY1679</strain>
    </source>
</reference>
<reference key="3">
    <citation type="journal article" date="1997" name="Nature">
        <title>The nucleotide sequence of Saccharomyces cerevisiae chromosome XV.</title>
        <authorList>
            <person name="Dujon B."/>
            <person name="Albermann K."/>
            <person name="Aldea M."/>
            <person name="Alexandraki D."/>
            <person name="Ansorge W."/>
            <person name="Arino J."/>
            <person name="Benes V."/>
            <person name="Bohn C."/>
            <person name="Bolotin-Fukuhara M."/>
            <person name="Bordonne R."/>
            <person name="Boyer J."/>
            <person name="Camasses A."/>
            <person name="Casamayor A."/>
            <person name="Casas C."/>
            <person name="Cheret G."/>
            <person name="Cziepluch C."/>
            <person name="Daignan-Fornier B."/>
            <person name="Dang V.-D."/>
            <person name="de Haan M."/>
            <person name="Delius H."/>
            <person name="Durand P."/>
            <person name="Fairhead C."/>
            <person name="Feldmann H."/>
            <person name="Gaillon L."/>
            <person name="Galisson F."/>
            <person name="Gamo F.-J."/>
            <person name="Gancedo C."/>
            <person name="Goffeau A."/>
            <person name="Goulding S.E."/>
            <person name="Grivell L.A."/>
            <person name="Habbig B."/>
            <person name="Hand N.J."/>
            <person name="Hani J."/>
            <person name="Hattenhorst U."/>
            <person name="Hebling U."/>
            <person name="Hernando Y."/>
            <person name="Herrero E."/>
            <person name="Heumann K."/>
            <person name="Hiesel R."/>
            <person name="Hilger F."/>
            <person name="Hofmann B."/>
            <person name="Hollenberg C.P."/>
            <person name="Hughes B."/>
            <person name="Jauniaux J.-C."/>
            <person name="Kalogeropoulos A."/>
            <person name="Katsoulou C."/>
            <person name="Kordes E."/>
            <person name="Lafuente M.J."/>
            <person name="Landt O."/>
            <person name="Louis E.J."/>
            <person name="Maarse A.C."/>
            <person name="Madania A."/>
            <person name="Mannhaupt G."/>
            <person name="Marck C."/>
            <person name="Martin R.P."/>
            <person name="Mewes H.-W."/>
            <person name="Michaux G."/>
            <person name="Paces V."/>
            <person name="Parle-McDermott A.G."/>
            <person name="Pearson B.M."/>
            <person name="Perrin A."/>
            <person name="Pettersson B."/>
            <person name="Poch O."/>
            <person name="Pohl T.M."/>
            <person name="Poirey R."/>
            <person name="Portetelle D."/>
            <person name="Pujol A."/>
            <person name="Purnelle B."/>
            <person name="Ramezani Rad M."/>
            <person name="Rechmann S."/>
            <person name="Schwager C."/>
            <person name="Schweizer M."/>
            <person name="Sor F."/>
            <person name="Sterky F."/>
            <person name="Tarassov I.A."/>
            <person name="Teodoru C."/>
            <person name="Tettelin H."/>
            <person name="Thierry A."/>
            <person name="Tobiasch E."/>
            <person name="Tzermia M."/>
            <person name="Uhlen M."/>
            <person name="Unseld M."/>
            <person name="Valens M."/>
            <person name="Vandenbol M."/>
            <person name="Vetter I."/>
            <person name="Vlcek C."/>
            <person name="Voet M."/>
            <person name="Volckaert G."/>
            <person name="Voss H."/>
            <person name="Wambutt R."/>
            <person name="Wedler H."/>
            <person name="Wiemann S."/>
            <person name="Winsor B."/>
            <person name="Wolfe K.H."/>
            <person name="Zollner A."/>
            <person name="Zumstein E."/>
            <person name="Kleine K."/>
        </authorList>
    </citation>
    <scope>NUCLEOTIDE SEQUENCE [LARGE SCALE GENOMIC DNA]</scope>
    <source>
        <strain>ATCC 204508 / S288c</strain>
    </source>
</reference>
<reference key="4">
    <citation type="journal article" date="2014" name="G3 (Bethesda)">
        <title>The reference genome sequence of Saccharomyces cerevisiae: Then and now.</title>
        <authorList>
            <person name="Engel S.R."/>
            <person name="Dietrich F.S."/>
            <person name="Fisk D.G."/>
            <person name="Binkley G."/>
            <person name="Balakrishnan R."/>
            <person name="Costanzo M.C."/>
            <person name="Dwight S.S."/>
            <person name="Hitz B.C."/>
            <person name="Karra K."/>
            <person name="Nash R.S."/>
            <person name="Weng S."/>
            <person name="Wong E.D."/>
            <person name="Lloyd P."/>
            <person name="Skrzypek M.S."/>
            <person name="Miyasato S.R."/>
            <person name="Simison M."/>
            <person name="Cherry J.M."/>
        </authorList>
    </citation>
    <scope>GENOME REANNOTATION</scope>
    <source>
        <strain>ATCC 204508 / S288c</strain>
    </source>
</reference>
<reference key="5">
    <citation type="journal article" date="2007" name="Genome Res.">
        <title>Approaching a complete repository of sequence-verified protein-encoding clones for Saccharomyces cerevisiae.</title>
        <authorList>
            <person name="Hu Y."/>
            <person name="Rolfs A."/>
            <person name="Bhullar B."/>
            <person name="Murthy T.V.S."/>
            <person name="Zhu C."/>
            <person name="Berger M.F."/>
            <person name="Camargo A.A."/>
            <person name="Kelley F."/>
            <person name="McCarron S."/>
            <person name="Jepson D."/>
            <person name="Richardson A."/>
            <person name="Raphael J."/>
            <person name="Moreira D."/>
            <person name="Taycher E."/>
            <person name="Zuo D."/>
            <person name="Mohr S."/>
            <person name="Kane M.F."/>
            <person name="Williamson J."/>
            <person name="Simpson A.J.G."/>
            <person name="Bulyk M.L."/>
            <person name="Harlow E."/>
            <person name="Marsischky G."/>
            <person name="Kolodner R.D."/>
            <person name="LaBaer J."/>
        </authorList>
    </citation>
    <scope>NUCLEOTIDE SEQUENCE [GENOMIC DNA]</scope>
    <source>
        <strain>ATCC 204508 / S288c</strain>
    </source>
</reference>
<reference key="6">
    <citation type="journal article" date="2003" name="Nature">
        <title>Global analysis of protein expression in yeast.</title>
        <authorList>
            <person name="Ghaemmaghami S."/>
            <person name="Huh W.-K."/>
            <person name="Bower K."/>
            <person name="Howson R.W."/>
            <person name="Belle A."/>
            <person name="Dephoure N."/>
            <person name="O'Shea E.K."/>
            <person name="Weissman J.S."/>
        </authorList>
    </citation>
    <scope>LEVEL OF PROTEIN EXPRESSION [LARGE SCALE ANALYSIS]</scope>
</reference>
<reference key="7">
    <citation type="journal article" date="2005" name="Mol. Cell. Proteomics">
        <title>Quantitative phosphoproteomics applied to the yeast pheromone signaling pathway.</title>
        <authorList>
            <person name="Gruhler A."/>
            <person name="Olsen J.V."/>
            <person name="Mohammed S."/>
            <person name="Mortensen P."/>
            <person name="Faergeman N.J."/>
            <person name="Mann M."/>
            <person name="Jensen O.N."/>
        </authorList>
    </citation>
    <scope>PHOSPHORYLATION [LARGE SCALE ANALYSIS] AT SER-94</scope>
    <scope>IDENTIFICATION BY MASS SPECTROMETRY [LARGE SCALE ANALYSIS]</scope>
    <source>
        <strain>YAL6B</strain>
    </source>
</reference>
<reference key="8">
    <citation type="journal article" date="2008" name="Mol. Cell. Proteomics">
        <title>A multidimensional chromatography technology for in-depth phosphoproteome analysis.</title>
        <authorList>
            <person name="Albuquerque C.P."/>
            <person name="Smolka M.B."/>
            <person name="Payne S.H."/>
            <person name="Bafna V."/>
            <person name="Eng J."/>
            <person name="Zhou H."/>
        </authorList>
    </citation>
    <scope>PHOSPHORYLATION [LARGE SCALE ANALYSIS] AT SER-94</scope>
    <scope>IDENTIFICATION BY MASS SPECTROMETRY [LARGE SCALE ANALYSIS]</scope>
</reference>
<reference key="9">
    <citation type="journal article" date="2009" name="Science">
        <title>Global analysis of Cdk1 substrate phosphorylation sites provides insights into evolution.</title>
        <authorList>
            <person name="Holt L.J."/>
            <person name="Tuch B.B."/>
            <person name="Villen J."/>
            <person name="Johnson A.D."/>
            <person name="Gygi S.P."/>
            <person name="Morgan D.O."/>
        </authorList>
    </citation>
    <scope>PHOSPHORYLATION [LARGE SCALE ANALYSIS] AT SER-94</scope>
    <scope>IDENTIFICATION BY MASS SPECTROMETRY [LARGE SCALE ANALYSIS]</scope>
</reference>
<reference key="10">
    <citation type="journal article" date="2012" name="Proc. Natl. Acad. Sci. U.S.A.">
        <title>N-terminal acetylome analyses and functional insights of the N-terminal acetyltransferase NatB.</title>
        <authorList>
            <person name="Van Damme P."/>
            <person name="Lasa M."/>
            <person name="Polevoda B."/>
            <person name="Gazquez C."/>
            <person name="Elosegui-Artola A."/>
            <person name="Kim D.S."/>
            <person name="De Juan-Pardo E."/>
            <person name="Demeyer K."/>
            <person name="Hole K."/>
            <person name="Larrea E."/>
            <person name="Timmerman E."/>
            <person name="Prieto J."/>
            <person name="Arnesen T."/>
            <person name="Sherman F."/>
            <person name="Gevaert K."/>
            <person name="Aldabe R."/>
        </authorList>
    </citation>
    <scope>IDENTIFICATION BY MASS SPECTROMETRY [LARGE SCALE ANALYSIS]</scope>
</reference>
<protein>
    <recommendedName>
        <fullName>Tubulin-specific chaperone A</fullName>
    </recommendedName>
    <alternativeName>
        <fullName>Tubulin-folding cofactor A</fullName>
        <shortName>CFA</shortName>
    </alternativeName>
</protein>
<gene>
    <name type="primary">RBL2</name>
    <name type="ordered locus">YOR265W</name>
</gene>